<protein>
    <recommendedName>
        <fullName evidence="1">DNA-directed RNA polymerase subunit beta</fullName>
        <shortName evidence="1">RNAP subunit beta</shortName>
        <ecNumber evidence="1">2.7.7.6</ecNumber>
    </recommendedName>
    <alternativeName>
        <fullName evidence="1">RNA polymerase subunit beta</fullName>
    </alternativeName>
    <alternativeName>
        <fullName evidence="1">Transcriptase subunit beta</fullName>
    </alternativeName>
</protein>
<dbReference type="EC" id="2.7.7.6" evidence="1"/>
<dbReference type="EMBL" id="CP000100">
    <property type="protein sequence ID" value="ABB57552.1"/>
    <property type="molecule type" value="Genomic_DNA"/>
</dbReference>
<dbReference type="RefSeq" id="WP_011378064.1">
    <property type="nucleotide sequence ID" value="NC_007604.1"/>
</dbReference>
<dbReference type="PDB" id="8SYI">
    <property type="method" value="EM"/>
    <property type="resolution" value="2.94 A"/>
    <property type="chains" value="C=1-1100"/>
</dbReference>
<dbReference type="PDB" id="8URW">
    <property type="method" value="EM"/>
    <property type="resolution" value="2.79 A"/>
    <property type="chains" value="C=1-1100"/>
</dbReference>
<dbReference type="PDBsum" id="8SYI"/>
<dbReference type="PDBsum" id="8URW"/>
<dbReference type="EMDB" id="EMD-40874"/>
<dbReference type="EMDB" id="EMD-42502"/>
<dbReference type="SMR" id="Q31N17"/>
<dbReference type="STRING" id="1140.Synpcc7942_1522"/>
<dbReference type="PaxDb" id="1140-Synpcc7942_1522"/>
<dbReference type="KEGG" id="syf:Synpcc7942_1522"/>
<dbReference type="eggNOG" id="COG0085">
    <property type="taxonomic scope" value="Bacteria"/>
</dbReference>
<dbReference type="HOGENOM" id="CLU_000524_4_1_3"/>
<dbReference type="OrthoDB" id="9803954at2"/>
<dbReference type="BioCyc" id="SYNEL:SYNPCC7942_1522-MONOMER"/>
<dbReference type="Proteomes" id="UP000889800">
    <property type="component" value="Chromosome"/>
</dbReference>
<dbReference type="GO" id="GO:0000428">
    <property type="term" value="C:DNA-directed RNA polymerase complex"/>
    <property type="evidence" value="ECO:0007669"/>
    <property type="project" value="UniProtKB-KW"/>
</dbReference>
<dbReference type="GO" id="GO:0003677">
    <property type="term" value="F:DNA binding"/>
    <property type="evidence" value="ECO:0007669"/>
    <property type="project" value="UniProtKB-UniRule"/>
</dbReference>
<dbReference type="GO" id="GO:0003899">
    <property type="term" value="F:DNA-directed RNA polymerase activity"/>
    <property type="evidence" value="ECO:0007669"/>
    <property type="project" value="UniProtKB-UniRule"/>
</dbReference>
<dbReference type="GO" id="GO:0032549">
    <property type="term" value="F:ribonucleoside binding"/>
    <property type="evidence" value="ECO:0007669"/>
    <property type="project" value="InterPro"/>
</dbReference>
<dbReference type="GO" id="GO:0006351">
    <property type="term" value="P:DNA-templated transcription"/>
    <property type="evidence" value="ECO:0007669"/>
    <property type="project" value="UniProtKB-UniRule"/>
</dbReference>
<dbReference type="CDD" id="cd00653">
    <property type="entry name" value="RNA_pol_B_RPB2"/>
    <property type="match status" value="1"/>
</dbReference>
<dbReference type="FunFam" id="3.90.1800.10:FF:000001">
    <property type="entry name" value="DNA-directed RNA polymerase subunit beta"/>
    <property type="match status" value="1"/>
</dbReference>
<dbReference type="Gene3D" id="2.40.50.100">
    <property type="match status" value="1"/>
</dbReference>
<dbReference type="Gene3D" id="2.40.50.150">
    <property type="match status" value="1"/>
</dbReference>
<dbReference type="Gene3D" id="3.90.1100.10">
    <property type="match status" value="1"/>
</dbReference>
<dbReference type="Gene3D" id="2.30.150.10">
    <property type="entry name" value="DNA-directed RNA polymerase, beta subunit, external 1 domain"/>
    <property type="match status" value="1"/>
</dbReference>
<dbReference type="Gene3D" id="2.40.270.10">
    <property type="entry name" value="DNA-directed RNA polymerase, subunit 2, domain 6"/>
    <property type="match status" value="1"/>
</dbReference>
<dbReference type="Gene3D" id="3.90.1800.10">
    <property type="entry name" value="RNA polymerase alpha subunit dimerisation domain"/>
    <property type="match status" value="1"/>
</dbReference>
<dbReference type="Gene3D" id="3.90.1110.10">
    <property type="entry name" value="RNA polymerase Rpb2, domain 2"/>
    <property type="match status" value="1"/>
</dbReference>
<dbReference type="HAMAP" id="MF_01321">
    <property type="entry name" value="RNApol_bact_RpoB"/>
    <property type="match status" value="1"/>
</dbReference>
<dbReference type="InterPro" id="IPR042107">
    <property type="entry name" value="DNA-dir_RNA_pol_bsu_ext_1_sf"/>
</dbReference>
<dbReference type="InterPro" id="IPR019462">
    <property type="entry name" value="DNA-dir_RNA_pol_bsu_external_1"/>
</dbReference>
<dbReference type="InterPro" id="IPR015712">
    <property type="entry name" value="DNA-dir_RNA_pol_su2"/>
</dbReference>
<dbReference type="InterPro" id="IPR007120">
    <property type="entry name" value="DNA-dir_RNAP_su2_dom"/>
</dbReference>
<dbReference type="InterPro" id="IPR037033">
    <property type="entry name" value="DNA-dir_RNAP_su2_hyb_sf"/>
</dbReference>
<dbReference type="InterPro" id="IPR010243">
    <property type="entry name" value="RNA_pol_bsu_bac"/>
</dbReference>
<dbReference type="InterPro" id="IPR007121">
    <property type="entry name" value="RNA_pol_bsu_CS"/>
</dbReference>
<dbReference type="InterPro" id="IPR007644">
    <property type="entry name" value="RNA_pol_bsu_protrusion"/>
</dbReference>
<dbReference type="InterPro" id="IPR007642">
    <property type="entry name" value="RNA_pol_Rpb2_2"/>
</dbReference>
<dbReference type="InterPro" id="IPR037034">
    <property type="entry name" value="RNA_pol_Rpb2_2_sf"/>
</dbReference>
<dbReference type="InterPro" id="IPR007645">
    <property type="entry name" value="RNA_pol_Rpb2_3"/>
</dbReference>
<dbReference type="InterPro" id="IPR007641">
    <property type="entry name" value="RNA_pol_Rpb2_7"/>
</dbReference>
<dbReference type="InterPro" id="IPR014724">
    <property type="entry name" value="RNA_pol_RPB2_OB-fold"/>
</dbReference>
<dbReference type="NCBIfam" id="NF001616">
    <property type="entry name" value="PRK00405.1"/>
    <property type="match status" value="1"/>
</dbReference>
<dbReference type="NCBIfam" id="TIGR02013">
    <property type="entry name" value="rpoB"/>
    <property type="match status" value="1"/>
</dbReference>
<dbReference type="PANTHER" id="PTHR20856">
    <property type="entry name" value="DNA-DIRECTED RNA POLYMERASE I SUBUNIT 2"/>
    <property type="match status" value="1"/>
</dbReference>
<dbReference type="Pfam" id="PF04563">
    <property type="entry name" value="RNA_pol_Rpb2_1"/>
    <property type="match status" value="1"/>
</dbReference>
<dbReference type="Pfam" id="PF04561">
    <property type="entry name" value="RNA_pol_Rpb2_2"/>
    <property type="match status" value="1"/>
</dbReference>
<dbReference type="Pfam" id="PF04565">
    <property type="entry name" value="RNA_pol_Rpb2_3"/>
    <property type="match status" value="1"/>
</dbReference>
<dbReference type="Pfam" id="PF10385">
    <property type="entry name" value="RNA_pol_Rpb2_45"/>
    <property type="match status" value="1"/>
</dbReference>
<dbReference type="Pfam" id="PF00562">
    <property type="entry name" value="RNA_pol_Rpb2_6"/>
    <property type="match status" value="1"/>
</dbReference>
<dbReference type="Pfam" id="PF04560">
    <property type="entry name" value="RNA_pol_Rpb2_7"/>
    <property type="match status" value="1"/>
</dbReference>
<dbReference type="SUPFAM" id="SSF64484">
    <property type="entry name" value="beta and beta-prime subunits of DNA dependent RNA-polymerase"/>
    <property type="match status" value="1"/>
</dbReference>
<dbReference type="PROSITE" id="PS01166">
    <property type="entry name" value="RNA_POL_BETA"/>
    <property type="match status" value="1"/>
</dbReference>
<accession>Q31N17</accession>
<organism>
    <name type="scientific">Synechococcus elongatus (strain ATCC 33912 / PCC 7942 / FACHB-805)</name>
    <name type="common">Anacystis nidulans R2</name>
    <dbReference type="NCBI Taxonomy" id="1140"/>
    <lineage>
        <taxon>Bacteria</taxon>
        <taxon>Bacillati</taxon>
        <taxon>Cyanobacteriota</taxon>
        <taxon>Cyanophyceae</taxon>
        <taxon>Synechococcales</taxon>
        <taxon>Synechococcaceae</taxon>
        <taxon>Synechococcus</taxon>
    </lineage>
</organism>
<reference key="1">
    <citation type="submission" date="2005-08" db="EMBL/GenBank/DDBJ databases">
        <title>Complete sequence of chromosome 1 of Synechococcus elongatus PCC 7942.</title>
        <authorList>
            <consortium name="US DOE Joint Genome Institute"/>
            <person name="Copeland A."/>
            <person name="Lucas S."/>
            <person name="Lapidus A."/>
            <person name="Barry K."/>
            <person name="Detter J.C."/>
            <person name="Glavina T."/>
            <person name="Hammon N."/>
            <person name="Israni S."/>
            <person name="Pitluck S."/>
            <person name="Schmutz J."/>
            <person name="Larimer F."/>
            <person name="Land M."/>
            <person name="Kyrpides N."/>
            <person name="Lykidis A."/>
            <person name="Golden S."/>
            <person name="Richardson P."/>
        </authorList>
    </citation>
    <scope>NUCLEOTIDE SEQUENCE [LARGE SCALE GENOMIC DNA]</scope>
    <source>
        <strain>ATCC 33912 / PCC 7942 / FACHB-805</strain>
    </source>
</reference>
<gene>
    <name evidence="1" type="primary">rpoB</name>
    <name type="ordered locus">Synpcc7942_1522</name>
</gene>
<keyword id="KW-0002">3D-structure</keyword>
<keyword id="KW-0240">DNA-directed RNA polymerase</keyword>
<keyword id="KW-0548">Nucleotidyltransferase</keyword>
<keyword id="KW-1185">Reference proteome</keyword>
<keyword id="KW-0804">Transcription</keyword>
<keyword id="KW-0808">Transferase</keyword>
<feature type="chain" id="PRO_0000237320" description="DNA-directed RNA polymerase subunit beta">
    <location>
        <begin position="1"/>
        <end position="1100"/>
    </location>
</feature>
<feature type="region of interest" description="Disordered" evidence="2">
    <location>
        <begin position="1064"/>
        <end position="1100"/>
    </location>
</feature>
<feature type="compositionally biased region" description="Polar residues" evidence="2">
    <location>
        <begin position="1079"/>
        <end position="1089"/>
    </location>
</feature>
<feature type="helix" evidence="4">
    <location>
        <begin position="19"/>
        <end position="37"/>
    </location>
</feature>
<feature type="strand" evidence="4">
    <location>
        <begin position="46"/>
        <end position="48"/>
    </location>
</feature>
<feature type="strand" evidence="4">
    <location>
        <begin position="52"/>
        <end position="54"/>
    </location>
</feature>
<feature type="turn" evidence="4">
    <location>
        <begin position="56"/>
        <end position="58"/>
    </location>
</feature>
<feature type="helix" evidence="4">
    <location>
        <begin position="68"/>
        <end position="73"/>
    </location>
</feature>
<feature type="strand" evidence="4">
    <location>
        <begin position="79"/>
        <end position="88"/>
    </location>
</feature>
<feature type="strand" evidence="4">
    <location>
        <begin position="91"/>
        <end position="93"/>
    </location>
</feature>
<feature type="strand" evidence="4">
    <location>
        <begin position="100"/>
        <end position="107"/>
    </location>
</feature>
<feature type="strand" evidence="4">
    <location>
        <begin position="115"/>
        <end position="117"/>
    </location>
</feature>
<feature type="strand" evidence="4">
    <location>
        <begin position="120"/>
        <end position="124"/>
    </location>
</feature>
<feature type="strand" evidence="4">
    <location>
        <begin position="126"/>
        <end position="130"/>
    </location>
</feature>
<feature type="strand" evidence="4">
    <location>
        <begin position="132"/>
        <end position="141"/>
    </location>
</feature>
<feature type="strand" evidence="4">
    <location>
        <begin position="144"/>
        <end position="153"/>
    </location>
</feature>
<feature type="strand" evidence="4">
    <location>
        <begin position="155"/>
        <end position="157"/>
    </location>
</feature>
<feature type="strand" evidence="4">
    <location>
        <begin position="160"/>
        <end position="164"/>
    </location>
</feature>
<feature type="strand" evidence="4">
    <location>
        <begin position="166"/>
        <end position="168"/>
    </location>
</feature>
<feature type="strand" evidence="4">
    <location>
        <begin position="170"/>
        <end position="174"/>
    </location>
</feature>
<feature type="helix" evidence="4">
    <location>
        <begin position="182"/>
        <end position="188"/>
    </location>
</feature>
<feature type="helix" evidence="4">
    <location>
        <begin position="193"/>
        <end position="198"/>
    </location>
</feature>
<feature type="helix" evidence="4">
    <location>
        <begin position="203"/>
        <end position="213"/>
    </location>
</feature>
<feature type="helix" evidence="4">
    <location>
        <begin position="218"/>
        <end position="229"/>
    </location>
</feature>
<feature type="strand" evidence="4">
    <location>
        <begin position="230"/>
        <end position="233"/>
    </location>
</feature>
<feature type="helix" evidence="4">
    <location>
        <begin position="237"/>
        <end position="248"/>
    </location>
</feature>
<feature type="turn" evidence="3">
    <location>
        <begin position="251"/>
        <end position="253"/>
    </location>
</feature>
<feature type="helix" evidence="4">
    <location>
        <begin position="257"/>
        <end position="268"/>
    </location>
</feature>
<feature type="helix" evidence="4">
    <location>
        <begin position="281"/>
        <end position="295"/>
    </location>
</feature>
<feature type="strand" evidence="3">
    <location>
        <begin position="306"/>
        <end position="308"/>
    </location>
</feature>
<feature type="helix" evidence="4">
    <location>
        <begin position="309"/>
        <end position="311"/>
    </location>
</feature>
<feature type="strand" evidence="4">
    <location>
        <begin position="312"/>
        <end position="315"/>
    </location>
</feature>
<feature type="helix" evidence="4">
    <location>
        <begin position="317"/>
        <end position="342"/>
    </location>
</feature>
<feature type="helix" evidence="4">
    <location>
        <begin position="350"/>
        <end position="353"/>
    </location>
</feature>
<feature type="helix" evidence="4">
    <location>
        <begin position="357"/>
        <end position="368"/>
    </location>
</feature>
<feature type="strand" evidence="4">
    <location>
        <begin position="371"/>
        <end position="375"/>
    </location>
</feature>
<feature type="helix" evidence="4">
    <location>
        <begin position="381"/>
        <end position="387"/>
    </location>
</feature>
<feature type="strand" evidence="4">
    <location>
        <begin position="390"/>
        <end position="395"/>
    </location>
</feature>
<feature type="turn" evidence="4">
    <location>
        <begin position="401"/>
        <end position="403"/>
    </location>
</feature>
<feature type="helix" evidence="4">
    <location>
        <begin position="407"/>
        <end position="409"/>
    </location>
</feature>
<feature type="helix" evidence="4">
    <location>
        <begin position="413"/>
        <end position="415"/>
    </location>
</feature>
<feature type="turn" evidence="4">
    <location>
        <begin position="416"/>
        <end position="418"/>
    </location>
</feature>
<feature type="turn" evidence="4">
    <location>
        <begin position="428"/>
        <end position="431"/>
    </location>
</feature>
<feature type="strand" evidence="4">
    <location>
        <begin position="432"/>
        <end position="436"/>
    </location>
</feature>
<feature type="strand" evidence="4">
    <location>
        <begin position="444"/>
        <end position="446"/>
    </location>
</feature>
<feature type="strand" evidence="4">
    <location>
        <begin position="448"/>
        <end position="456"/>
    </location>
</feature>
<feature type="strand" evidence="3">
    <location>
        <begin position="459"/>
        <end position="461"/>
    </location>
</feature>
<feature type="strand" evidence="4">
    <location>
        <begin position="467"/>
        <end position="469"/>
    </location>
</feature>
<feature type="turn" evidence="4">
    <location>
        <begin position="471"/>
        <end position="473"/>
    </location>
</feature>
<feature type="strand" evidence="4">
    <location>
        <begin position="486"/>
        <end position="492"/>
    </location>
</feature>
<feature type="strand" evidence="4">
    <location>
        <begin position="497"/>
        <end position="501"/>
    </location>
</feature>
<feature type="strand" evidence="4">
    <location>
        <begin position="504"/>
        <end position="508"/>
    </location>
</feature>
<feature type="strand" evidence="4">
    <location>
        <begin position="515"/>
        <end position="518"/>
    </location>
</feature>
<feature type="turn" evidence="4">
    <location>
        <begin position="520"/>
        <end position="523"/>
    </location>
</feature>
<feature type="helix" evidence="4">
    <location>
        <begin position="527"/>
        <end position="530"/>
    </location>
</feature>
<feature type="helix" evidence="4">
    <location>
        <begin position="534"/>
        <end position="536"/>
    </location>
</feature>
<feature type="helix" evidence="4">
    <location>
        <begin position="539"/>
        <end position="549"/>
    </location>
</feature>
<feature type="strand" evidence="4">
    <location>
        <begin position="562"/>
        <end position="564"/>
    </location>
</feature>
<feature type="helix" evidence="4">
    <location>
        <begin position="568"/>
        <end position="573"/>
    </location>
</feature>
<feature type="strand" evidence="4">
    <location>
        <begin position="583"/>
        <end position="591"/>
    </location>
</feature>
<feature type="strand" evidence="4">
    <location>
        <begin position="594"/>
        <end position="602"/>
    </location>
</feature>
<feature type="strand" evidence="4">
    <location>
        <begin position="604"/>
        <end position="608"/>
    </location>
</feature>
<feature type="strand" evidence="4">
    <location>
        <begin position="612"/>
        <end position="614"/>
    </location>
</feature>
<feature type="strand" evidence="3">
    <location>
        <begin position="623"/>
        <end position="625"/>
    </location>
</feature>
<feature type="strand" evidence="4">
    <location>
        <begin position="638"/>
        <end position="641"/>
    </location>
</feature>
<feature type="strand" evidence="4">
    <location>
        <begin position="645"/>
        <end position="650"/>
    </location>
</feature>
<feature type="strand" evidence="4">
    <location>
        <begin position="653"/>
        <end position="660"/>
    </location>
</feature>
<feature type="turn" evidence="4">
    <location>
        <begin position="666"/>
        <end position="669"/>
    </location>
</feature>
<feature type="strand" evidence="4">
    <location>
        <begin position="670"/>
        <end position="675"/>
    </location>
</feature>
<feature type="helix" evidence="4">
    <location>
        <begin position="677"/>
        <end position="680"/>
    </location>
</feature>
<feature type="turn" evidence="4">
    <location>
        <begin position="681"/>
        <end position="684"/>
    </location>
</feature>
<feature type="strand" evidence="4">
    <location>
        <begin position="686"/>
        <end position="698"/>
    </location>
</feature>
<feature type="helix" evidence="4">
    <location>
        <begin position="715"/>
        <end position="717"/>
    </location>
</feature>
<feature type="strand" evidence="4">
    <location>
        <begin position="718"/>
        <end position="722"/>
    </location>
</feature>
<feature type="turn" evidence="4">
    <location>
        <begin position="723"/>
        <end position="725"/>
    </location>
</feature>
<feature type="strand" evidence="4">
    <location>
        <begin position="738"/>
        <end position="740"/>
    </location>
</feature>
<feature type="strand" evidence="4">
    <location>
        <begin position="742"/>
        <end position="745"/>
    </location>
</feature>
<feature type="helix" evidence="4">
    <location>
        <begin position="753"/>
        <end position="762"/>
    </location>
</feature>
<feature type="strand" evidence="4">
    <location>
        <begin position="769"/>
        <end position="771"/>
    </location>
</feature>
<feature type="strand" evidence="4">
    <location>
        <begin position="782"/>
        <end position="795"/>
    </location>
</feature>
<feature type="strand" evidence="4">
    <location>
        <begin position="802"/>
        <end position="814"/>
    </location>
</feature>
<feature type="strand" evidence="4">
    <location>
        <begin position="821"/>
        <end position="823"/>
    </location>
</feature>
<feature type="strand" evidence="4">
    <location>
        <begin position="829"/>
        <end position="836"/>
    </location>
</feature>
<feature type="turn" evidence="3">
    <location>
        <begin position="838"/>
        <end position="840"/>
    </location>
</feature>
<feature type="strand" evidence="4">
    <location>
        <begin position="851"/>
        <end position="854"/>
    </location>
</feature>
<feature type="helix" evidence="4">
    <location>
        <begin position="858"/>
        <end position="862"/>
    </location>
</feature>
<feature type="helix" evidence="4">
    <location>
        <begin position="866"/>
        <end position="880"/>
    </location>
</feature>
<feature type="helix" evidence="4">
    <location>
        <begin position="890"/>
        <end position="893"/>
    </location>
</feature>
<feature type="helix" evidence="4">
    <location>
        <begin position="897"/>
        <end position="913"/>
    </location>
</feature>
<feature type="helix" evidence="4">
    <location>
        <begin position="916"/>
        <end position="918"/>
    </location>
</feature>
<feature type="strand" evidence="4">
    <location>
        <begin position="921"/>
        <end position="923"/>
    </location>
</feature>
<feature type="turn" evidence="4">
    <location>
        <begin position="932"/>
        <end position="934"/>
    </location>
</feature>
<feature type="strand" evidence="4">
    <location>
        <begin position="942"/>
        <end position="953"/>
    </location>
</feature>
<feature type="helix" evidence="4">
    <location>
        <begin position="956"/>
        <end position="958"/>
    </location>
</feature>
<feature type="strand" evidence="4">
    <location>
        <begin position="961"/>
        <end position="965"/>
    </location>
</feature>
<feature type="strand" evidence="4">
    <location>
        <begin position="970"/>
        <end position="972"/>
    </location>
</feature>
<feature type="helix" evidence="4">
    <location>
        <begin position="979"/>
        <end position="981"/>
    </location>
</feature>
<feature type="strand" evidence="4">
    <location>
        <begin position="985"/>
        <end position="987"/>
    </location>
</feature>
<feature type="helix" evidence="4">
    <location>
        <begin position="989"/>
        <end position="998"/>
    </location>
</feature>
<feature type="helix" evidence="4">
    <location>
        <begin position="1001"/>
        <end position="1008"/>
    </location>
</feature>
<feature type="turn" evidence="4">
    <location>
        <begin position="1009"/>
        <end position="1013"/>
    </location>
</feature>
<feature type="helix" evidence="4">
    <location>
        <begin position="1017"/>
        <end position="1027"/>
    </location>
</feature>
<feature type="helix" evidence="4">
    <location>
        <begin position="1038"/>
        <end position="1048"/>
    </location>
</feature>
<feature type="turn" evidence="4">
    <location>
        <begin position="1049"/>
        <end position="1051"/>
    </location>
</feature>
<feature type="strand" evidence="4">
    <location>
        <begin position="1052"/>
        <end position="1058"/>
    </location>
</feature>
<feature type="strand" evidence="4">
    <location>
        <begin position="1062"/>
        <end position="1064"/>
    </location>
</feature>
<feature type="strand" evidence="3">
    <location>
        <begin position="1068"/>
        <end position="1070"/>
    </location>
</feature>
<feature type="strand" evidence="4">
    <location>
        <begin position="1072"/>
        <end position="1074"/>
    </location>
</feature>
<comment type="function">
    <text evidence="1">DNA-dependent RNA polymerase catalyzes the transcription of DNA into RNA using the four ribonucleoside triphosphates as substrates.</text>
</comment>
<comment type="catalytic activity">
    <reaction evidence="1">
        <text>RNA(n) + a ribonucleoside 5'-triphosphate = RNA(n+1) + diphosphate</text>
        <dbReference type="Rhea" id="RHEA:21248"/>
        <dbReference type="Rhea" id="RHEA-COMP:14527"/>
        <dbReference type="Rhea" id="RHEA-COMP:17342"/>
        <dbReference type="ChEBI" id="CHEBI:33019"/>
        <dbReference type="ChEBI" id="CHEBI:61557"/>
        <dbReference type="ChEBI" id="CHEBI:140395"/>
        <dbReference type="EC" id="2.7.7.6"/>
    </reaction>
</comment>
<comment type="subunit">
    <text evidence="1">In cyanobacteria the RNAP catalytic core is composed of 2 alpha, 1 beta, 1 beta', 1 gamma and 1 omega subunit. When a sigma factor is associated with the core the holoenzyme is formed, which can initiate transcription.</text>
</comment>
<comment type="similarity">
    <text evidence="1">Belongs to the RNA polymerase beta chain family.</text>
</comment>
<name>RPOB_SYNE7</name>
<evidence type="ECO:0000255" key="1">
    <source>
        <dbReference type="HAMAP-Rule" id="MF_01321"/>
    </source>
</evidence>
<evidence type="ECO:0000256" key="2">
    <source>
        <dbReference type="SAM" id="MobiDB-lite"/>
    </source>
</evidence>
<evidence type="ECO:0007829" key="3">
    <source>
        <dbReference type="PDB" id="8SYI"/>
    </source>
</evidence>
<evidence type="ECO:0007829" key="4">
    <source>
        <dbReference type="PDB" id="8URW"/>
    </source>
</evidence>
<proteinExistence type="evidence at protein level"/>
<sequence>MAEQTQLAPAAFHLPDLVAIQRNSFRWFLEEGLIEELESFSPITDYTGKLELHFLGKQYKLKRPKYDVDEAKRRDGTYSVQMYVPTRLINKETGEIKEQEVFIGDLPLMTDRGTFIINGAERVIVNQIVRSPGVYYKSERDKNGRLTHNASLIPNRGAWLKFETDKNGLVWVRIDKTRKLSAQVLLKALGLSDNEIYDKLRHPEYYQKTIDKEGQFSEDEALMELYRKLRPGEPPTVSGGQQLLESRFFDPKRYDLGRVGRYKLNKKLGLNVADTVRTLTSEDILAAIDYLINLELDLGGCEVDDIDHLGNRRVRSVGELLQNQVRVGLNRLERIIRERMTVSDSDSLSPASLVNPKPLVAAIKEFFGSSQLSQFMDQTNPLAELTHKRRLSALGPGGLTRERAGFAVRDIHPSHYGRICPIETPEGPNAGLIGSLATHARVNDYGFIETPFWRVEEGRVRKDLAPVYMTADQEDDLRVAPGDVATDDAGYILGTTIPVRYRQDFTTTTPERVDYVALSPVQIISVATSLIPFLEHDDANRALMGSNMQRQAVPLLRPERPLVGTGLEPQAARDSGMVITSPVDGTISYVDATHIEVTADTGEKYGYALQKYQRSNQDTCLNQRPIVFEGDRVQRGQVIADGSATEKGELALGQNILVAYMPWEGYNYEDAILISERLVYDDVYTSIHIEKFEIEARQTKLGPEEITREIPNVGEDALRQLDENGIIRVGAWVESGDILVGKVTPKGESDQPPEEKLLRAIFGEKARDVRDNSLRVPNGEKGRVVDVRLFTREQGDELPPGANMVVRVYVAQKRKIQVGDKMAGRHGNKGIISRILPCEDMPYLPDGTPLDIVLNPLGVPSRMNVGQVFECMLGWAGQLLDARFKVTPFDEMYGAEASRLTVNAKLSEAREQTGQPWVFSDDEPGKIQVYDGRTGEPFDRPVTVGRAYMLKLVHLVDDKIHARSTGPYSLVTQQPLGGKAQQGGQRFGEMEVWALEAYGAAYILQELLTVKSDDMQGRNEALNAIVKGKAIPRPGTPESFKVLMRELQSLCLDIAVYKASTEDYEEDKEVDLMADVNQRRTPSRPTYESMSVGDIDDDDD</sequence>